<accession>A4TGR3</accession>
<keyword id="KW-0963">Cytoplasm</keyword>
<keyword id="KW-0808">Transferase</keyword>
<evidence type="ECO:0000255" key="1">
    <source>
        <dbReference type="HAMAP-Rule" id="MF_01009"/>
    </source>
</evidence>
<proteinExistence type="inferred from homology"/>
<dbReference type="EC" id="2.8.1.1" evidence="1"/>
<dbReference type="EMBL" id="CP000668">
    <property type="protein sequence ID" value="ABP38476.1"/>
    <property type="molecule type" value="Genomic_DNA"/>
</dbReference>
<dbReference type="RefSeq" id="WP_002218928.1">
    <property type="nucleotide sequence ID" value="NZ_CP009715.1"/>
</dbReference>
<dbReference type="SMR" id="A4TGR3"/>
<dbReference type="KEGG" id="ypp:YPDSF_0050"/>
<dbReference type="PATRIC" id="fig|386656.14.peg.521"/>
<dbReference type="GO" id="GO:0005737">
    <property type="term" value="C:cytoplasm"/>
    <property type="evidence" value="ECO:0007669"/>
    <property type="project" value="UniProtKB-SubCell"/>
</dbReference>
<dbReference type="GO" id="GO:0004792">
    <property type="term" value="F:thiosulfate-cyanide sulfurtransferase activity"/>
    <property type="evidence" value="ECO:0007669"/>
    <property type="project" value="UniProtKB-UniRule"/>
</dbReference>
<dbReference type="GO" id="GO:0006071">
    <property type="term" value="P:glycerol metabolic process"/>
    <property type="evidence" value="ECO:0007669"/>
    <property type="project" value="UniProtKB-UniRule"/>
</dbReference>
<dbReference type="CDD" id="cd01444">
    <property type="entry name" value="GlpE_ST"/>
    <property type="match status" value="1"/>
</dbReference>
<dbReference type="Gene3D" id="3.40.250.10">
    <property type="entry name" value="Rhodanese-like domain"/>
    <property type="match status" value="1"/>
</dbReference>
<dbReference type="HAMAP" id="MF_01009">
    <property type="entry name" value="Thiosulf_sulfurtr"/>
    <property type="match status" value="1"/>
</dbReference>
<dbReference type="InterPro" id="IPR050229">
    <property type="entry name" value="GlpE_sulfurtransferase"/>
</dbReference>
<dbReference type="InterPro" id="IPR001763">
    <property type="entry name" value="Rhodanese-like_dom"/>
</dbReference>
<dbReference type="InterPro" id="IPR036873">
    <property type="entry name" value="Rhodanese-like_dom_sf"/>
</dbReference>
<dbReference type="InterPro" id="IPR023695">
    <property type="entry name" value="Thiosulf_sulfurTrfase"/>
</dbReference>
<dbReference type="NCBIfam" id="NF001195">
    <property type="entry name" value="PRK00162.1"/>
    <property type="match status" value="1"/>
</dbReference>
<dbReference type="PANTHER" id="PTHR43031">
    <property type="entry name" value="FAD-DEPENDENT OXIDOREDUCTASE"/>
    <property type="match status" value="1"/>
</dbReference>
<dbReference type="PANTHER" id="PTHR43031:SF6">
    <property type="entry name" value="THIOSULFATE SULFURTRANSFERASE GLPE"/>
    <property type="match status" value="1"/>
</dbReference>
<dbReference type="Pfam" id="PF00581">
    <property type="entry name" value="Rhodanese"/>
    <property type="match status" value="1"/>
</dbReference>
<dbReference type="SMART" id="SM00450">
    <property type="entry name" value="RHOD"/>
    <property type="match status" value="1"/>
</dbReference>
<dbReference type="SUPFAM" id="SSF52821">
    <property type="entry name" value="Rhodanese/Cell cycle control phosphatase"/>
    <property type="match status" value="1"/>
</dbReference>
<dbReference type="PROSITE" id="PS50206">
    <property type="entry name" value="RHODANESE_3"/>
    <property type="match status" value="1"/>
</dbReference>
<reference key="1">
    <citation type="submission" date="2007-02" db="EMBL/GenBank/DDBJ databases">
        <title>Complete sequence of chromosome of Yersinia pestis Pestoides F.</title>
        <authorList>
            <consortium name="US DOE Joint Genome Institute"/>
            <person name="Copeland A."/>
            <person name="Lucas S."/>
            <person name="Lapidus A."/>
            <person name="Barry K."/>
            <person name="Detter J.C."/>
            <person name="Glavina del Rio T."/>
            <person name="Hammon N."/>
            <person name="Israni S."/>
            <person name="Dalin E."/>
            <person name="Tice H."/>
            <person name="Pitluck S."/>
            <person name="Di Bartolo G."/>
            <person name="Chain P."/>
            <person name="Malfatti S."/>
            <person name="Shin M."/>
            <person name="Vergez L."/>
            <person name="Schmutz J."/>
            <person name="Larimer F."/>
            <person name="Land M."/>
            <person name="Hauser L."/>
            <person name="Worsham P."/>
            <person name="Chu M."/>
            <person name="Bearden S."/>
            <person name="Garcia E."/>
            <person name="Richardson P."/>
        </authorList>
    </citation>
    <scope>NUCLEOTIDE SEQUENCE [LARGE SCALE GENOMIC DNA]</scope>
    <source>
        <strain>Pestoides F</strain>
    </source>
</reference>
<feature type="chain" id="PRO_1000062987" description="Thiosulfate sulfurtransferase GlpE">
    <location>
        <begin position="1"/>
        <end position="109"/>
    </location>
</feature>
<feature type="domain" description="Rhodanese" evidence="1">
    <location>
        <begin position="17"/>
        <end position="105"/>
    </location>
</feature>
<feature type="active site" description="Cysteine persulfide intermediate" evidence="1">
    <location>
        <position position="65"/>
    </location>
</feature>
<gene>
    <name evidence="1" type="primary">glpE</name>
    <name type="ordered locus">YPDSF_0050</name>
</gene>
<organism>
    <name type="scientific">Yersinia pestis (strain Pestoides F)</name>
    <dbReference type="NCBI Taxonomy" id="386656"/>
    <lineage>
        <taxon>Bacteria</taxon>
        <taxon>Pseudomonadati</taxon>
        <taxon>Pseudomonadota</taxon>
        <taxon>Gammaproteobacteria</taxon>
        <taxon>Enterobacterales</taxon>
        <taxon>Yersiniaceae</taxon>
        <taxon>Yersinia</taxon>
    </lineage>
</organism>
<protein>
    <recommendedName>
        <fullName evidence="1">Thiosulfate sulfurtransferase GlpE</fullName>
        <ecNumber evidence="1">2.8.1.1</ecNumber>
    </recommendedName>
</protein>
<sequence length="109" mass="12316">MEQFEAISVEQAYLRWKEGKTALVDIRDPQSYEAGHAPGAFHLTNSSLHTFMQQTDFDQPVMVMCYHGNSSKGAAQYLLQQGFDVVYSIDGGFEAWARSYPQDITSESR</sequence>
<comment type="function">
    <text evidence="1">Transferase that catalyzes the transfer of sulfur from thiosulfate to thiophilic acceptors such as cyanide or dithiols. May function in a CysM-independent thiosulfate assimilation pathway by catalyzing the conversion of thiosulfate to sulfite, which can then be used for L-cysteine biosynthesis.</text>
</comment>
<comment type="catalytic activity">
    <reaction evidence="1">
        <text>thiosulfate + hydrogen cyanide = thiocyanate + sulfite + 2 H(+)</text>
        <dbReference type="Rhea" id="RHEA:16881"/>
        <dbReference type="ChEBI" id="CHEBI:15378"/>
        <dbReference type="ChEBI" id="CHEBI:17359"/>
        <dbReference type="ChEBI" id="CHEBI:18022"/>
        <dbReference type="ChEBI" id="CHEBI:18407"/>
        <dbReference type="ChEBI" id="CHEBI:33542"/>
        <dbReference type="EC" id="2.8.1.1"/>
    </reaction>
</comment>
<comment type="catalytic activity">
    <reaction evidence="1">
        <text>thiosulfate + [thioredoxin]-dithiol = [thioredoxin]-disulfide + hydrogen sulfide + sulfite + 2 H(+)</text>
        <dbReference type="Rhea" id="RHEA:83859"/>
        <dbReference type="Rhea" id="RHEA-COMP:10698"/>
        <dbReference type="Rhea" id="RHEA-COMP:10700"/>
        <dbReference type="ChEBI" id="CHEBI:15378"/>
        <dbReference type="ChEBI" id="CHEBI:17359"/>
        <dbReference type="ChEBI" id="CHEBI:29919"/>
        <dbReference type="ChEBI" id="CHEBI:29950"/>
        <dbReference type="ChEBI" id="CHEBI:33542"/>
        <dbReference type="ChEBI" id="CHEBI:50058"/>
    </reaction>
</comment>
<comment type="subcellular location">
    <subcellularLocation>
        <location evidence="1">Cytoplasm</location>
    </subcellularLocation>
</comment>
<comment type="similarity">
    <text evidence="1">Belongs to the GlpE family.</text>
</comment>
<name>GLPE_YERPP</name>